<protein>
    <recommendedName>
        <fullName>Histone-binding protein MSI1</fullName>
    </recommendedName>
    <alternativeName>
        <fullName>CAF-1 p48 homolog</fullName>
    </alternativeName>
    <alternativeName>
        <fullName evidence="2">Chromatin assembly factor 1 subunit C</fullName>
        <shortName evidence="2">CAF-1 subunit C</shortName>
    </alternativeName>
    <alternativeName>
        <fullName>WD-40 repeat-containing protein MSI1</fullName>
    </alternativeName>
</protein>
<dbReference type="EMBL" id="AC147427">
    <property type="protein sequence ID" value="AAT85286.1"/>
    <property type="status" value="ALT_SEQ"/>
    <property type="molecule type" value="Genomic_DNA"/>
</dbReference>
<dbReference type="EMBL" id="DP000009">
    <property type="protein sequence ID" value="ABF97823.1"/>
    <property type="molecule type" value="Genomic_DNA"/>
</dbReference>
<dbReference type="EMBL" id="AP008209">
    <property type="protein sequence ID" value="BAF12655.1"/>
    <property type="molecule type" value="Genomic_DNA"/>
</dbReference>
<dbReference type="EMBL" id="AP014959">
    <property type="protein sequence ID" value="BAS85423.1"/>
    <property type="molecule type" value="Genomic_DNA"/>
</dbReference>
<dbReference type="EMBL" id="AK059114">
    <property type="status" value="NOT_ANNOTATED_CDS"/>
    <property type="molecule type" value="mRNA"/>
</dbReference>
<dbReference type="RefSeq" id="XP_015632366.1">
    <property type="nucleotide sequence ID" value="XM_015776880.1"/>
</dbReference>
<dbReference type="SMR" id="Q10G81"/>
<dbReference type="FunCoup" id="Q10G81">
    <property type="interactions" value="3238"/>
</dbReference>
<dbReference type="STRING" id="39947.Q10G81"/>
<dbReference type="PaxDb" id="39947-Q10G81"/>
<dbReference type="EnsemblPlants" id="Os03t0640100-01">
    <property type="protein sequence ID" value="Os03t0640100-01"/>
    <property type="gene ID" value="Os03g0640100"/>
</dbReference>
<dbReference type="Gramene" id="Os03t0640100-01">
    <property type="protein sequence ID" value="Os03t0640100-01"/>
    <property type="gene ID" value="Os03g0640100"/>
</dbReference>
<dbReference type="KEGG" id="dosa:Os03g0640100"/>
<dbReference type="eggNOG" id="KOG0264">
    <property type="taxonomic scope" value="Eukaryota"/>
</dbReference>
<dbReference type="HOGENOM" id="CLU_020445_3_1_1"/>
<dbReference type="InParanoid" id="Q10G81"/>
<dbReference type="OMA" id="PHEEGCL"/>
<dbReference type="OrthoDB" id="427795at2759"/>
<dbReference type="Proteomes" id="UP000000763">
    <property type="component" value="Chromosome 3"/>
</dbReference>
<dbReference type="Proteomes" id="UP000059680">
    <property type="component" value="Chromosome 3"/>
</dbReference>
<dbReference type="GO" id="GO:0005677">
    <property type="term" value="C:chromatin silencing complex"/>
    <property type="evidence" value="ECO:0007669"/>
    <property type="project" value="EnsemblPlants"/>
</dbReference>
<dbReference type="GO" id="GO:0070176">
    <property type="term" value="C:DRM complex"/>
    <property type="evidence" value="ECO:0007669"/>
    <property type="project" value="EnsemblPlants"/>
</dbReference>
<dbReference type="GO" id="GO:0005634">
    <property type="term" value="C:nucleus"/>
    <property type="evidence" value="ECO:0000318"/>
    <property type="project" value="GO_Central"/>
</dbReference>
<dbReference type="GO" id="GO:0042393">
    <property type="term" value="F:histone binding"/>
    <property type="evidence" value="ECO:0000318"/>
    <property type="project" value="GO_Central"/>
</dbReference>
<dbReference type="GO" id="GO:0006338">
    <property type="term" value="P:chromatin remodeling"/>
    <property type="evidence" value="ECO:0000318"/>
    <property type="project" value="GO_Central"/>
</dbReference>
<dbReference type="GO" id="GO:0006310">
    <property type="term" value="P:DNA recombination"/>
    <property type="evidence" value="ECO:0007669"/>
    <property type="project" value="UniProtKB-KW"/>
</dbReference>
<dbReference type="GO" id="GO:0006281">
    <property type="term" value="P:DNA repair"/>
    <property type="evidence" value="ECO:0007669"/>
    <property type="project" value="UniProtKB-KW"/>
</dbReference>
<dbReference type="GO" id="GO:0006260">
    <property type="term" value="P:DNA replication"/>
    <property type="evidence" value="ECO:0007669"/>
    <property type="project" value="UniProtKB-KW"/>
</dbReference>
<dbReference type="GO" id="GO:0009793">
    <property type="term" value="P:embryo development ending in seed dormancy"/>
    <property type="evidence" value="ECO:0007669"/>
    <property type="project" value="EnsemblPlants"/>
</dbReference>
<dbReference type="GO" id="GO:0031507">
    <property type="term" value="P:heterochromatin formation"/>
    <property type="evidence" value="ECO:0007669"/>
    <property type="project" value="EnsemblPlants"/>
</dbReference>
<dbReference type="GO" id="GO:0070828">
    <property type="term" value="P:heterochromatin organization"/>
    <property type="evidence" value="ECO:0007669"/>
    <property type="project" value="EnsemblPlants"/>
</dbReference>
<dbReference type="GO" id="GO:0048366">
    <property type="term" value="P:leaf development"/>
    <property type="evidence" value="ECO:0007669"/>
    <property type="project" value="EnsemblPlants"/>
</dbReference>
<dbReference type="GO" id="GO:0009555">
    <property type="term" value="P:pollen development"/>
    <property type="evidence" value="ECO:0007669"/>
    <property type="project" value="EnsemblPlants"/>
</dbReference>
<dbReference type="GO" id="GO:0045787">
    <property type="term" value="P:positive regulation of cell cycle"/>
    <property type="evidence" value="ECO:0007669"/>
    <property type="project" value="EnsemblPlants"/>
</dbReference>
<dbReference type="GO" id="GO:0006355">
    <property type="term" value="P:regulation of DNA-templated transcription"/>
    <property type="evidence" value="ECO:0000318"/>
    <property type="project" value="GO_Central"/>
</dbReference>
<dbReference type="GO" id="GO:0009909">
    <property type="term" value="P:regulation of flower development"/>
    <property type="evidence" value="ECO:0007669"/>
    <property type="project" value="EnsemblPlants"/>
</dbReference>
<dbReference type="GO" id="GO:0010214">
    <property type="term" value="P:seed coat development"/>
    <property type="evidence" value="ECO:0007669"/>
    <property type="project" value="EnsemblPlants"/>
</dbReference>
<dbReference type="GO" id="GO:0010026">
    <property type="term" value="P:trichome differentiation"/>
    <property type="evidence" value="ECO:0007669"/>
    <property type="project" value="EnsemblPlants"/>
</dbReference>
<dbReference type="FunFam" id="2.130.10.10:FF:000512">
    <property type="entry name" value="WD-40 repeat-containing protein MSI1"/>
    <property type="match status" value="1"/>
</dbReference>
<dbReference type="Gene3D" id="2.130.10.10">
    <property type="entry name" value="YVTN repeat-like/Quinoprotein amine dehydrogenase"/>
    <property type="match status" value="1"/>
</dbReference>
<dbReference type="InterPro" id="IPR020472">
    <property type="entry name" value="G-protein_beta_WD-40_rep"/>
</dbReference>
<dbReference type="InterPro" id="IPR022052">
    <property type="entry name" value="Histone-bd_RBBP4-like_N"/>
</dbReference>
<dbReference type="InterPro" id="IPR015943">
    <property type="entry name" value="WD40/YVTN_repeat-like_dom_sf"/>
</dbReference>
<dbReference type="InterPro" id="IPR019775">
    <property type="entry name" value="WD40_repeat_CS"/>
</dbReference>
<dbReference type="InterPro" id="IPR036322">
    <property type="entry name" value="WD40_repeat_dom_sf"/>
</dbReference>
<dbReference type="InterPro" id="IPR001680">
    <property type="entry name" value="WD40_rpt"/>
</dbReference>
<dbReference type="InterPro" id="IPR050459">
    <property type="entry name" value="WD_repeat_RBAP46/RBAP48/MSI1"/>
</dbReference>
<dbReference type="PANTHER" id="PTHR22850">
    <property type="entry name" value="WD40 REPEAT FAMILY"/>
    <property type="match status" value="1"/>
</dbReference>
<dbReference type="Pfam" id="PF12265">
    <property type="entry name" value="CAF1C_H4-bd"/>
    <property type="match status" value="1"/>
</dbReference>
<dbReference type="Pfam" id="PF00400">
    <property type="entry name" value="WD40"/>
    <property type="match status" value="5"/>
</dbReference>
<dbReference type="PRINTS" id="PR00320">
    <property type="entry name" value="GPROTEINBRPT"/>
</dbReference>
<dbReference type="SMART" id="SM00320">
    <property type="entry name" value="WD40"/>
    <property type="match status" value="6"/>
</dbReference>
<dbReference type="SUPFAM" id="SSF50978">
    <property type="entry name" value="WD40 repeat-like"/>
    <property type="match status" value="1"/>
</dbReference>
<dbReference type="PROSITE" id="PS00678">
    <property type="entry name" value="WD_REPEATS_1"/>
    <property type="match status" value="1"/>
</dbReference>
<dbReference type="PROSITE" id="PS50082">
    <property type="entry name" value="WD_REPEATS_2"/>
    <property type="match status" value="4"/>
</dbReference>
<dbReference type="PROSITE" id="PS50294">
    <property type="entry name" value="WD_REPEATS_REGION"/>
    <property type="match status" value="1"/>
</dbReference>
<accession>Q10G81</accession>
<accession>A0A0P0W0N0</accession>
<accession>Q6ASS7</accession>
<feature type="chain" id="PRO_0000420140" description="Histone-binding protein MSI1">
    <location>
        <begin position="1"/>
        <end position="428"/>
    </location>
</feature>
<feature type="repeat" description="WD 1">
    <location>
        <begin position="127"/>
        <end position="167"/>
    </location>
</feature>
<feature type="repeat" description="WD 2">
    <location>
        <begin position="180"/>
        <end position="220"/>
    </location>
</feature>
<feature type="repeat" description="WD 3">
    <location>
        <begin position="229"/>
        <end position="269"/>
    </location>
</feature>
<feature type="repeat" description="WD 4">
    <location>
        <begin position="275"/>
        <end position="315"/>
    </location>
</feature>
<feature type="repeat" description="WD 5">
    <location>
        <begin position="319"/>
        <end position="359"/>
    </location>
</feature>
<feature type="repeat" description="WD 6">
    <location>
        <begin position="376"/>
        <end position="416"/>
    </location>
</feature>
<feature type="sequence conflict" description="In Ref. 5; AK059114." evidence="2" ref="5">
    <original>T</original>
    <variation>A</variation>
    <location>
        <position position="312"/>
    </location>
</feature>
<name>MSI1_ORYSJ</name>
<organism>
    <name type="scientific">Oryza sativa subsp. japonica</name>
    <name type="common">Rice</name>
    <dbReference type="NCBI Taxonomy" id="39947"/>
    <lineage>
        <taxon>Eukaryota</taxon>
        <taxon>Viridiplantae</taxon>
        <taxon>Streptophyta</taxon>
        <taxon>Embryophyta</taxon>
        <taxon>Tracheophyta</taxon>
        <taxon>Spermatophyta</taxon>
        <taxon>Magnoliopsida</taxon>
        <taxon>Liliopsida</taxon>
        <taxon>Poales</taxon>
        <taxon>Poaceae</taxon>
        <taxon>BOP clade</taxon>
        <taxon>Oryzoideae</taxon>
        <taxon>Oryzeae</taxon>
        <taxon>Oryzinae</taxon>
        <taxon>Oryza</taxon>
        <taxon>Oryza sativa</taxon>
    </lineage>
</organism>
<reference key="1">
    <citation type="journal article" date="2005" name="Genome Res.">
        <title>Sequence, annotation, and analysis of synteny between rice chromosome 3 and diverged grass species.</title>
        <authorList>
            <consortium name="The rice chromosome 3 sequencing consortium"/>
            <person name="Buell C.R."/>
            <person name="Yuan Q."/>
            <person name="Ouyang S."/>
            <person name="Liu J."/>
            <person name="Zhu W."/>
            <person name="Wang A."/>
            <person name="Maiti R."/>
            <person name="Haas B."/>
            <person name="Wortman J."/>
            <person name="Pertea M."/>
            <person name="Jones K.M."/>
            <person name="Kim M."/>
            <person name="Overton L."/>
            <person name="Tsitrin T."/>
            <person name="Fadrosh D."/>
            <person name="Bera J."/>
            <person name="Weaver B."/>
            <person name="Jin S."/>
            <person name="Johri S."/>
            <person name="Reardon M."/>
            <person name="Webb K."/>
            <person name="Hill J."/>
            <person name="Moffat K."/>
            <person name="Tallon L."/>
            <person name="Van Aken S."/>
            <person name="Lewis M."/>
            <person name="Utterback T."/>
            <person name="Feldblyum T."/>
            <person name="Zismann V."/>
            <person name="Iobst S."/>
            <person name="Hsiao J."/>
            <person name="de Vazeille A.R."/>
            <person name="Salzberg S.L."/>
            <person name="White O."/>
            <person name="Fraser C.M."/>
            <person name="Yu Y."/>
            <person name="Kim H."/>
            <person name="Rambo T."/>
            <person name="Currie J."/>
            <person name="Collura K."/>
            <person name="Kernodle-Thompson S."/>
            <person name="Wei F."/>
            <person name="Kudrna K."/>
            <person name="Ammiraju J.S.S."/>
            <person name="Luo M."/>
            <person name="Goicoechea J.L."/>
            <person name="Wing R.A."/>
            <person name="Henry D."/>
            <person name="Oates R."/>
            <person name="Palmer M."/>
            <person name="Pries G."/>
            <person name="Saski C."/>
            <person name="Simmons J."/>
            <person name="Soderlund C."/>
            <person name="Nelson W."/>
            <person name="de la Bastide M."/>
            <person name="Spiegel L."/>
            <person name="Nascimento L."/>
            <person name="Huang E."/>
            <person name="Preston R."/>
            <person name="Zutavern T."/>
            <person name="Palmer L."/>
            <person name="O'Shaughnessy A."/>
            <person name="Dike S."/>
            <person name="McCombie W.R."/>
            <person name="Minx P."/>
            <person name="Cordum H."/>
            <person name="Wilson R."/>
            <person name="Jin W."/>
            <person name="Lee H.R."/>
            <person name="Jiang J."/>
            <person name="Jackson S."/>
        </authorList>
    </citation>
    <scope>NUCLEOTIDE SEQUENCE [LARGE SCALE GENOMIC DNA]</scope>
    <source>
        <strain>cv. Nipponbare</strain>
    </source>
</reference>
<reference key="2">
    <citation type="journal article" date="2005" name="Nature">
        <title>The map-based sequence of the rice genome.</title>
        <authorList>
            <consortium name="International rice genome sequencing project (IRGSP)"/>
        </authorList>
    </citation>
    <scope>NUCLEOTIDE SEQUENCE [LARGE SCALE GENOMIC DNA]</scope>
    <source>
        <strain>cv. Nipponbare</strain>
    </source>
</reference>
<reference key="3">
    <citation type="journal article" date="2008" name="Nucleic Acids Res.">
        <title>The rice annotation project database (RAP-DB): 2008 update.</title>
        <authorList>
            <consortium name="The rice annotation project (RAP)"/>
        </authorList>
    </citation>
    <scope>GENOME REANNOTATION</scope>
    <source>
        <strain>cv. Nipponbare</strain>
    </source>
</reference>
<reference key="4">
    <citation type="journal article" date="2013" name="Rice">
        <title>Improvement of the Oryza sativa Nipponbare reference genome using next generation sequence and optical map data.</title>
        <authorList>
            <person name="Kawahara Y."/>
            <person name="de la Bastide M."/>
            <person name="Hamilton J.P."/>
            <person name="Kanamori H."/>
            <person name="McCombie W.R."/>
            <person name="Ouyang S."/>
            <person name="Schwartz D.C."/>
            <person name="Tanaka T."/>
            <person name="Wu J."/>
            <person name="Zhou S."/>
            <person name="Childs K.L."/>
            <person name="Davidson R.M."/>
            <person name="Lin H."/>
            <person name="Quesada-Ocampo L."/>
            <person name="Vaillancourt B."/>
            <person name="Sakai H."/>
            <person name="Lee S.S."/>
            <person name="Kim J."/>
            <person name="Numa H."/>
            <person name="Itoh T."/>
            <person name="Buell C.R."/>
            <person name="Matsumoto T."/>
        </authorList>
    </citation>
    <scope>GENOME REANNOTATION</scope>
    <source>
        <strain>cv. Nipponbare</strain>
    </source>
</reference>
<reference key="5">
    <citation type="journal article" date="2003" name="Science">
        <title>Collection, mapping, and annotation of over 28,000 cDNA clones from japonica rice.</title>
        <authorList>
            <consortium name="The rice full-length cDNA consortium"/>
        </authorList>
    </citation>
    <scope>NUCLEOTIDE SEQUENCE [LARGE SCALE MRNA]</scope>
    <source>
        <strain>cv. Nipponbare</strain>
    </source>
</reference>
<comment type="function">
    <text evidence="1">Core histone-binding subunit that may target chromatin assembly factors, chromatin remodeling factors and histone deacetylases to their histone substrates in a manner that is regulated by nucleosomal DNA. Component of several complexes which regulate chromatin metabolism such as the chromatin assembly factor 1 (CAF-1) complex, which is required for chromatin assembly following DNA replication and DNA repair (By similarity).</text>
</comment>
<comment type="subunit">
    <text evidence="1">Component of the chromatin assembly factor 1 (CAF-1) complex, composed of FSM (FAS1), FAS2 and MSI1.</text>
</comment>
<comment type="subcellular location">
    <subcellularLocation>
        <location evidence="1">Nucleus</location>
    </subcellularLocation>
</comment>
<comment type="similarity">
    <text evidence="2">Belongs to the WD repeat RBAP46/RBAP48/MSI1 family.</text>
</comment>
<comment type="sequence caution" evidence="2">
    <conflict type="erroneous gene model prediction">
        <sequence resource="EMBL-CDS" id="AAT85286"/>
    </conflict>
</comment>
<proteinExistence type="evidence at transcript level"/>
<keyword id="KW-0143">Chaperone</keyword>
<keyword id="KW-0156">Chromatin regulator</keyword>
<keyword id="KW-0227">DNA damage</keyword>
<keyword id="KW-0233">DNA recombination</keyword>
<keyword id="KW-0234">DNA repair</keyword>
<keyword id="KW-0235">DNA replication</keyword>
<keyword id="KW-0539">Nucleus</keyword>
<keyword id="KW-1185">Reference proteome</keyword>
<keyword id="KW-0677">Repeat</keyword>
<keyword id="KW-0804">Transcription</keyword>
<keyword id="KW-0805">Transcription regulation</keyword>
<keyword id="KW-0853">WD repeat</keyword>
<sequence length="428" mass="48360">MPKATAAEEEEFRAEVEERLINEEYKIWKKNTPFLYDLVITHALEWPSLTVQWLPDRAEPAGKDHSVQKMVLGTHTSDNEPNYLMLAQVQLPLDDAEADARHYDDDHAEIGGFGAASGKVQIVQQINHDGEVNRARYMPQNSFIIATKTVSAEVYVFDYSKHPSKPPLDGACNPDLRLKGHNSEGYGLSWSIFKEGHLLSGSDDAQICLWDIKANSKNKTLDALQIFKYHDGVVEDVAWHLRHEYLFGSVGDDHNLLIWDLRSPVSTKPVQSVAAHQGEVNCLAFNPFNEWVVATGSTDKTVKLFDLRKIDTSLHTFDCHKEEVFQVGWSPKNETILASCCLGRRLMVWDLSRIDQEQTPEDAEDGPPELLFIHGGHTSKISDFSWNPCEDWVIASVAEDNILQIWQMAENIYHDEDDVPTDDPAKAP</sequence>
<gene>
    <name type="primary">MSI1</name>
    <name type="ordered locus">Os03g0640100</name>
    <name type="ordered locus">LOC_Os03g43890</name>
    <name type="ORF">B1394A07.14</name>
</gene>
<evidence type="ECO:0000250" key="1"/>
<evidence type="ECO:0000305" key="2"/>